<reference key="1">
    <citation type="submission" date="2008-01" db="EMBL/GenBank/DDBJ databases">
        <title>Complete sequence of Shewanella halifaxensis HAW-EB4.</title>
        <authorList>
            <consortium name="US DOE Joint Genome Institute"/>
            <person name="Copeland A."/>
            <person name="Lucas S."/>
            <person name="Lapidus A."/>
            <person name="Glavina del Rio T."/>
            <person name="Dalin E."/>
            <person name="Tice H."/>
            <person name="Bruce D."/>
            <person name="Goodwin L."/>
            <person name="Pitluck S."/>
            <person name="Sims D."/>
            <person name="Brettin T."/>
            <person name="Detter J.C."/>
            <person name="Han C."/>
            <person name="Kuske C.R."/>
            <person name="Schmutz J."/>
            <person name="Larimer F."/>
            <person name="Land M."/>
            <person name="Hauser L."/>
            <person name="Kyrpides N."/>
            <person name="Kim E."/>
            <person name="Zhao J.-S."/>
            <person name="Richardson P."/>
        </authorList>
    </citation>
    <scope>NUCLEOTIDE SEQUENCE [LARGE SCALE GENOMIC DNA]</scope>
    <source>
        <strain>HAW-EB4</strain>
    </source>
</reference>
<gene>
    <name evidence="1" type="primary">csrA</name>
    <name type="ordered locus">Shal_1234</name>
</gene>
<organism>
    <name type="scientific">Shewanella halifaxensis (strain HAW-EB4)</name>
    <dbReference type="NCBI Taxonomy" id="458817"/>
    <lineage>
        <taxon>Bacteria</taxon>
        <taxon>Pseudomonadati</taxon>
        <taxon>Pseudomonadota</taxon>
        <taxon>Gammaproteobacteria</taxon>
        <taxon>Alteromonadales</taxon>
        <taxon>Shewanellaceae</taxon>
        <taxon>Shewanella</taxon>
    </lineage>
</organism>
<comment type="function">
    <text evidence="1">A key translational regulator that binds mRNA to regulate translation initiation and/or mRNA stability. Mediates global changes in gene expression, shifting from rapid growth to stress survival by linking envelope stress, the stringent response and the catabolite repression systems. Usually binds in the 5'-UTR; binding at or near the Shine-Dalgarno sequence prevents ribosome-binding, repressing translation, binding elsewhere in the 5'-UTR can activate translation and/or stabilize the mRNA. Its function is antagonized by small RNA(s).</text>
</comment>
<comment type="subunit">
    <text evidence="1">Homodimer; the beta-strands of each monomer intercalate to form a hydrophobic core, while the alpha-helices form wings that extend away from the core.</text>
</comment>
<comment type="subcellular location">
    <subcellularLocation>
        <location evidence="1">Cytoplasm</location>
    </subcellularLocation>
</comment>
<comment type="similarity">
    <text evidence="1">Belongs to the CsrA/RsmA family.</text>
</comment>
<sequence>MLILTRRVGETLMIGDEVTVTVLGVKGNQVRIGVNAPKEVSVHREEIYQRIQSEKSGTPSEGGNF</sequence>
<proteinExistence type="inferred from homology"/>
<dbReference type="EMBL" id="CP000931">
    <property type="protein sequence ID" value="ABZ75803.1"/>
    <property type="molecule type" value="Genomic_DNA"/>
</dbReference>
<dbReference type="RefSeq" id="WP_006082602.1">
    <property type="nucleotide sequence ID" value="NC_010334.1"/>
</dbReference>
<dbReference type="SMR" id="B0TK16"/>
<dbReference type="STRING" id="458817.Shal_1234"/>
<dbReference type="GeneID" id="94727129"/>
<dbReference type="KEGG" id="shl:Shal_1234"/>
<dbReference type="eggNOG" id="COG1551">
    <property type="taxonomic scope" value="Bacteria"/>
</dbReference>
<dbReference type="HOGENOM" id="CLU_164837_2_2_6"/>
<dbReference type="OrthoDB" id="9809061at2"/>
<dbReference type="Proteomes" id="UP000001317">
    <property type="component" value="Chromosome"/>
</dbReference>
<dbReference type="GO" id="GO:0005829">
    <property type="term" value="C:cytosol"/>
    <property type="evidence" value="ECO:0007669"/>
    <property type="project" value="TreeGrafter"/>
</dbReference>
<dbReference type="GO" id="GO:0048027">
    <property type="term" value="F:mRNA 5'-UTR binding"/>
    <property type="evidence" value="ECO:0007669"/>
    <property type="project" value="UniProtKB-UniRule"/>
</dbReference>
<dbReference type="GO" id="GO:0006402">
    <property type="term" value="P:mRNA catabolic process"/>
    <property type="evidence" value="ECO:0007669"/>
    <property type="project" value="InterPro"/>
</dbReference>
<dbReference type="GO" id="GO:0045947">
    <property type="term" value="P:negative regulation of translational initiation"/>
    <property type="evidence" value="ECO:0007669"/>
    <property type="project" value="UniProtKB-UniRule"/>
</dbReference>
<dbReference type="GO" id="GO:0045948">
    <property type="term" value="P:positive regulation of translational initiation"/>
    <property type="evidence" value="ECO:0007669"/>
    <property type="project" value="UniProtKB-UniRule"/>
</dbReference>
<dbReference type="GO" id="GO:0006109">
    <property type="term" value="P:regulation of carbohydrate metabolic process"/>
    <property type="evidence" value="ECO:0007669"/>
    <property type="project" value="UniProtKB-UniRule"/>
</dbReference>
<dbReference type="FunFam" id="2.60.40.4380:FF:000001">
    <property type="entry name" value="Translational regulator CsrA"/>
    <property type="match status" value="1"/>
</dbReference>
<dbReference type="Gene3D" id="2.60.40.4380">
    <property type="entry name" value="Translational regulator CsrA"/>
    <property type="match status" value="1"/>
</dbReference>
<dbReference type="HAMAP" id="MF_00167">
    <property type="entry name" value="CsrA"/>
    <property type="match status" value="1"/>
</dbReference>
<dbReference type="InterPro" id="IPR003751">
    <property type="entry name" value="CsrA"/>
</dbReference>
<dbReference type="InterPro" id="IPR036107">
    <property type="entry name" value="CsrA_sf"/>
</dbReference>
<dbReference type="NCBIfam" id="TIGR00202">
    <property type="entry name" value="csrA"/>
    <property type="match status" value="1"/>
</dbReference>
<dbReference type="NCBIfam" id="NF002469">
    <property type="entry name" value="PRK01712.1"/>
    <property type="match status" value="1"/>
</dbReference>
<dbReference type="PANTHER" id="PTHR34984">
    <property type="entry name" value="CARBON STORAGE REGULATOR"/>
    <property type="match status" value="1"/>
</dbReference>
<dbReference type="PANTHER" id="PTHR34984:SF1">
    <property type="entry name" value="CARBON STORAGE REGULATOR"/>
    <property type="match status" value="1"/>
</dbReference>
<dbReference type="Pfam" id="PF02599">
    <property type="entry name" value="CsrA"/>
    <property type="match status" value="1"/>
</dbReference>
<dbReference type="SUPFAM" id="SSF117130">
    <property type="entry name" value="CsrA-like"/>
    <property type="match status" value="1"/>
</dbReference>
<keyword id="KW-0010">Activator</keyword>
<keyword id="KW-0963">Cytoplasm</keyword>
<keyword id="KW-0678">Repressor</keyword>
<keyword id="KW-0694">RNA-binding</keyword>
<keyword id="KW-0810">Translation regulation</keyword>
<protein>
    <recommendedName>
        <fullName evidence="1">Translational regulator CsrA</fullName>
    </recommendedName>
    <alternativeName>
        <fullName evidence="1">Carbon storage regulator</fullName>
    </alternativeName>
</protein>
<accession>B0TK16</accession>
<name>CSRA_SHEHH</name>
<evidence type="ECO:0000255" key="1">
    <source>
        <dbReference type="HAMAP-Rule" id="MF_00167"/>
    </source>
</evidence>
<feature type="chain" id="PRO_1000076997" description="Translational regulator CsrA">
    <location>
        <begin position="1"/>
        <end position="65"/>
    </location>
</feature>